<protein>
    <recommendedName>
        <fullName evidence="1">NADPH-dependent 7-cyano-7-deazaguanine reductase</fullName>
        <ecNumber evidence="1">1.7.1.13</ecNumber>
    </recommendedName>
    <alternativeName>
        <fullName evidence="1">7-cyano-7-carbaguanine reductase</fullName>
    </alternativeName>
    <alternativeName>
        <fullName evidence="1">NADPH-dependent nitrile oxidoreductase</fullName>
    </alternativeName>
    <alternativeName>
        <fullName evidence="1">PreQ(0) reductase</fullName>
    </alternativeName>
</protein>
<accession>Q6LN10</accession>
<comment type="function">
    <text evidence="1">Catalyzes the NADPH-dependent reduction of 7-cyano-7-deazaguanine (preQ0) to 7-aminomethyl-7-deazaguanine (preQ1).</text>
</comment>
<comment type="catalytic activity">
    <reaction evidence="1">
        <text>7-aminomethyl-7-carbaguanine + 2 NADP(+) = 7-cyano-7-deazaguanine + 2 NADPH + 3 H(+)</text>
        <dbReference type="Rhea" id="RHEA:13409"/>
        <dbReference type="ChEBI" id="CHEBI:15378"/>
        <dbReference type="ChEBI" id="CHEBI:45075"/>
        <dbReference type="ChEBI" id="CHEBI:57783"/>
        <dbReference type="ChEBI" id="CHEBI:58349"/>
        <dbReference type="ChEBI" id="CHEBI:58703"/>
        <dbReference type="EC" id="1.7.1.13"/>
    </reaction>
</comment>
<comment type="pathway">
    <text evidence="1">tRNA modification; tRNA-queuosine biosynthesis.</text>
</comment>
<comment type="subunit">
    <text evidence="1">Homodimer.</text>
</comment>
<comment type="subcellular location">
    <subcellularLocation>
        <location evidence="1">Cytoplasm</location>
    </subcellularLocation>
</comment>
<comment type="similarity">
    <text evidence="1">Belongs to the GTP cyclohydrolase I family. QueF type 2 subfamily.</text>
</comment>
<sequence>MSKYKDAKELAGLTLGQKTDYIDQYDASLLQPVPRSLNRSDLNLGESLPFTGYDIWTLYELSWLNSKGLPQVAIGEVRLPASSPNLIESKSFKLYLNSFNQTRFDSWQQIADTLQKDLTACAGQEVDVTIQPLEDFTDQTVINFAGNCIDEQDIEINSYDFDAQYLKDAAEGEIVTEDLHSHLLKSNCLITNQPDWGSVKISYKGKQINREKLLRYLVSFRNHNEFHEQCVERIFTDIMKFCQPELLTVYARYTRRGGLDINPYRTNQGKTPSDNFRLARQ</sequence>
<organism>
    <name type="scientific">Photobacterium profundum (strain SS9)</name>
    <dbReference type="NCBI Taxonomy" id="298386"/>
    <lineage>
        <taxon>Bacteria</taxon>
        <taxon>Pseudomonadati</taxon>
        <taxon>Pseudomonadota</taxon>
        <taxon>Gammaproteobacteria</taxon>
        <taxon>Vibrionales</taxon>
        <taxon>Vibrionaceae</taxon>
        <taxon>Photobacterium</taxon>
    </lineage>
</organism>
<proteinExistence type="inferred from homology"/>
<feature type="chain" id="PRO_0000163042" description="NADPH-dependent 7-cyano-7-deazaguanine reductase">
    <location>
        <begin position="1"/>
        <end position="281"/>
    </location>
</feature>
<feature type="active site" description="Thioimide intermediate" evidence="1">
    <location>
        <position position="188"/>
    </location>
</feature>
<feature type="active site" description="Proton donor" evidence="1">
    <location>
        <position position="195"/>
    </location>
</feature>
<feature type="binding site" evidence="1">
    <location>
        <begin position="87"/>
        <end position="89"/>
    </location>
    <ligand>
        <name>substrate</name>
    </ligand>
</feature>
<feature type="binding site" evidence="1">
    <location>
        <begin position="89"/>
        <end position="90"/>
    </location>
    <ligand>
        <name>NADPH</name>
        <dbReference type="ChEBI" id="CHEBI:57783"/>
    </ligand>
</feature>
<feature type="binding site" evidence="1">
    <location>
        <begin position="227"/>
        <end position="228"/>
    </location>
    <ligand>
        <name>substrate</name>
    </ligand>
</feature>
<feature type="binding site" evidence="1">
    <location>
        <begin position="256"/>
        <end position="257"/>
    </location>
    <ligand>
        <name>NADPH</name>
        <dbReference type="ChEBI" id="CHEBI:57783"/>
    </ligand>
</feature>
<gene>
    <name evidence="1" type="primary">queF</name>
    <name type="ordered locus">PBPRA2982</name>
</gene>
<evidence type="ECO:0000255" key="1">
    <source>
        <dbReference type="HAMAP-Rule" id="MF_00817"/>
    </source>
</evidence>
<dbReference type="EC" id="1.7.1.13" evidence="1"/>
<dbReference type="EMBL" id="CR378672">
    <property type="protein sequence ID" value="CAG21316.1"/>
    <property type="molecule type" value="Genomic_DNA"/>
</dbReference>
<dbReference type="RefSeq" id="WP_011219582.1">
    <property type="nucleotide sequence ID" value="NC_006370.1"/>
</dbReference>
<dbReference type="SMR" id="Q6LN10"/>
<dbReference type="STRING" id="298386.PBPRA2982"/>
<dbReference type="KEGG" id="ppr:PBPRA2982"/>
<dbReference type="eggNOG" id="COG0780">
    <property type="taxonomic scope" value="Bacteria"/>
</dbReference>
<dbReference type="eggNOG" id="COG2904">
    <property type="taxonomic scope" value="Bacteria"/>
</dbReference>
<dbReference type="HOGENOM" id="CLU_054738_0_0_6"/>
<dbReference type="UniPathway" id="UPA00392"/>
<dbReference type="Proteomes" id="UP000000593">
    <property type="component" value="Chromosome 1"/>
</dbReference>
<dbReference type="GO" id="GO:0005737">
    <property type="term" value="C:cytoplasm"/>
    <property type="evidence" value="ECO:0007669"/>
    <property type="project" value="UniProtKB-SubCell"/>
</dbReference>
<dbReference type="GO" id="GO:0033739">
    <property type="term" value="F:preQ1 synthase activity"/>
    <property type="evidence" value="ECO:0007669"/>
    <property type="project" value="UniProtKB-UniRule"/>
</dbReference>
<dbReference type="GO" id="GO:0008616">
    <property type="term" value="P:queuosine biosynthetic process"/>
    <property type="evidence" value="ECO:0007669"/>
    <property type="project" value="UniProtKB-UniRule"/>
</dbReference>
<dbReference type="GO" id="GO:0006400">
    <property type="term" value="P:tRNA modification"/>
    <property type="evidence" value="ECO:0007669"/>
    <property type="project" value="UniProtKB-UniRule"/>
</dbReference>
<dbReference type="Gene3D" id="3.30.1130.10">
    <property type="match status" value="2"/>
</dbReference>
<dbReference type="HAMAP" id="MF_00817">
    <property type="entry name" value="QueF_type2"/>
    <property type="match status" value="1"/>
</dbReference>
<dbReference type="InterPro" id="IPR043133">
    <property type="entry name" value="GTP-CH-I_C/QueF"/>
</dbReference>
<dbReference type="InterPro" id="IPR050084">
    <property type="entry name" value="NADPH_dep_7-cyano-7-deazaG_red"/>
</dbReference>
<dbReference type="InterPro" id="IPR029500">
    <property type="entry name" value="QueF"/>
</dbReference>
<dbReference type="InterPro" id="IPR029139">
    <property type="entry name" value="QueF_N"/>
</dbReference>
<dbReference type="InterPro" id="IPR016428">
    <property type="entry name" value="QueF_type2"/>
</dbReference>
<dbReference type="NCBIfam" id="TIGR03138">
    <property type="entry name" value="QueF"/>
    <property type="match status" value="1"/>
</dbReference>
<dbReference type="PANTHER" id="PTHR34354">
    <property type="entry name" value="NADPH-DEPENDENT 7-CYANO-7-DEAZAGUANINE REDUCTASE"/>
    <property type="match status" value="1"/>
</dbReference>
<dbReference type="PANTHER" id="PTHR34354:SF1">
    <property type="entry name" value="NADPH-DEPENDENT 7-CYANO-7-DEAZAGUANINE REDUCTASE"/>
    <property type="match status" value="1"/>
</dbReference>
<dbReference type="Pfam" id="PF14489">
    <property type="entry name" value="QueF"/>
    <property type="match status" value="1"/>
</dbReference>
<dbReference type="Pfam" id="PF14819">
    <property type="entry name" value="QueF_N"/>
    <property type="match status" value="1"/>
</dbReference>
<dbReference type="PIRSF" id="PIRSF004750">
    <property type="entry name" value="Nitrile_oxidored_YqcD_prd"/>
    <property type="match status" value="1"/>
</dbReference>
<dbReference type="SUPFAM" id="SSF55620">
    <property type="entry name" value="Tetrahydrobiopterin biosynthesis enzymes-like"/>
    <property type="match status" value="1"/>
</dbReference>
<keyword id="KW-0963">Cytoplasm</keyword>
<keyword id="KW-0521">NADP</keyword>
<keyword id="KW-0560">Oxidoreductase</keyword>
<keyword id="KW-0671">Queuosine biosynthesis</keyword>
<keyword id="KW-1185">Reference proteome</keyword>
<name>QUEF_PHOPR</name>
<reference key="1">
    <citation type="journal article" date="2005" name="Science">
        <title>Life at depth: Photobacterium profundum genome sequence and expression analysis.</title>
        <authorList>
            <person name="Vezzi A."/>
            <person name="Campanaro S."/>
            <person name="D'Angelo M."/>
            <person name="Simonato F."/>
            <person name="Vitulo N."/>
            <person name="Lauro F.M."/>
            <person name="Cestaro A."/>
            <person name="Malacrida G."/>
            <person name="Simionati B."/>
            <person name="Cannata N."/>
            <person name="Romualdi C."/>
            <person name="Bartlett D.H."/>
            <person name="Valle G."/>
        </authorList>
    </citation>
    <scope>NUCLEOTIDE SEQUENCE [LARGE SCALE GENOMIC DNA]</scope>
    <source>
        <strain>ATCC BAA-1253 / SS9</strain>
    </source>
</reference>